<name>RS10_STRTD</name>
<dbReference type="EMBL" id="CP000419">
    <property type="protein sequence ID" value="ABJ67022.1"/>
    <property type="molecule type" value="Genomic_DNA"/>
</dbReference>
<dbReference type="RefSeq" id="WP_002952168.1">
    <property type="nucleotide sequence ID" value="NC_008532.1"/>
</dbReference>
<dbReference type="SMR" id="Q03IF0"/>
<dbReference type="KEGG" id="ste:STER_1908"/>
<dbReference type="HOGENOM" id="CLU_122625_1_3_9"/>
<dbReference type="GO" id="GO:1990904">
    <property type="term" value="C:ribonucleoprotein complex"/>
    <property type="evidence" value="ECO:0007669"/>
    <property type="project" value="UniProtKB-KW"/>
</dbReference>
<dbReference type="GO" id="GO:0005840">
    <property type="term" value="C:ribosome"/>
    <property type="evidence" value="ECO:0007669"/>
    <property type="project" value="UniProtKB-KW"/>
</dbReference>
<dbReference type="GO" id="GO:0003735">
    <property type="term" value="F:structural constituent of ribosome"/>
    <property type="evidence" value="ECO:0007669"/>
    <property type="project" value="InterPro"/>
</dbReference>
<dbReference type="GO" id="GO:0000049">
    <property type="term" value="F:tRNA binding"/>
    <property type="evidence" value="ECO:0007669"/>
    <property type="project" value="UniProtKB-UniRule"/>
</dbReference>
<dbReference type="GO" id="GO:0006412">
    <property type="term" value="P:translation"/>
    <property type="evidence" value="ECO:0007669"/>
    <property type="project" value="UniProtKB-UniRule"/>
</dbReference>
<dbReference type="FunFam" id="3.30.70.600:FF:000001">
    <property type="entry name" value="30S ribosomal protein S10"/>
    <property type="match status" value="1"/>
</dbReference>
<dbReference type="Gene3D" id="3.30.70.600">
    <property type="entry name" value="Ribosomal protein S10 domain"/>
    <property type="match status" value="1"/>
</dbReference>
<dbReference type="HAMAP" id="MF_00508">
    <property type="entry name" value="Ribosomal_uS10"/>
    <property type="match status" value="1"/>
</dbReference>
<dbReference type="InterPro" id="IPR001848">
    <property type="entry name" value="Ribosomal_uS10"/>
</dbReference>
<dbReference type="InterPro" id="IPR018268">
    <property type="entry name" value="Ribosomal_uS10_CS"/>
</dbReference>
<dbReference type="InterPro" id="IPR027486">
    <property type="entry name" value="Ribosomal_uS10_dom"/>
</dbReference>
<dbReference type="InterPro" id="IPR036838">
    <property type="entry name" value="Ribosomal_uS10_dom_sf"/>
</dbReference>
<dbReference type="NCBIfam" id="NF001861">
    <property type="entry name" value="PRK00596.1"/>
    <property type="match status" value="1"/>
</dbReference>
<dbReference type="NCBIfam" id="TIGR01049">
    <property type="entry name" value="rpsJ_bact"/>
    <property type="match status" value="1"/>
</dbReference>
<dbReference type="PANTHER" id="PTHR11700">
    <property type="entry name" value="30S RIBOSOMAL PROTEIN S10 FAMILY MEMBER"/>
    <property type="match status" value="1"/>
</dbReference>
<dbReference type="Pfam" id="PF00338">
    <property type="entry name" value="Ribosomal_S10"/>
    <property type="match status" value="1"/>
</dbReference>
<dbReference type="PRINTS" id="PR00971">
    <property type="entry name" value="RIBOSOMALS10"/>
</dbReference>
<dbReference type="SMART" id="SM01403">
    <property type="entry name" value="Ribosomal_S10"/>
    <property type="match status" value="1"/>
</dbReference>
<dbReference type="SUPFAM" id="SSF54999">
    <property type="entry name" value="Ribosomal protein S10"/>
    <property type="match status" value="1"/>
</dbReference>
<dbReference type="PROSITE" id="PS00361">
    <property type="entry name" value="RIBOSOMAL_S10"/>
    <property type="match status" value="1"/>
</dbReference>
<feature type="chain" id="PRO_1000015125" description="Small ribosomal subunit protein uS10">
    <location>
        <begin position="1"/>
        <end position="102"/>
    </location>
</feature>
<organism>
    <name type="scientific">Streptococcus thermophilus (strain ATCC BAA-491 / LMD-9)</name>
    <dbReference type="NCBI Taxonomy" id="322159"/>
    <lineage>
        <taxon>Bacteria</taxon>
        <taxon>Bacillati</taxon>
        <taxon>Bacillota</taxon>
        <taxon>Bacilli</taxon>
        <taxon>Lactobacillales</taxon>
        <taxon>Streptococcaceae</taxon>
        <taxon>Streptococcus</taxon>
    </lineage>
</organism>
<gene>
    <name evidence="1" type="primary">rpsJ</name>
    <name type="ordered locus">STER_1908</name>
</gene>
<sequence length="102" mass="11556">MANKKIRIRLKAYEHRTLDTAAGKIVETATRTGATVAGPVPLPTERSLYTIIRATHKYKDSREQFEMRTHKRLIDIINPTQKTVDALMKLDLPSGVNVEIKL</sequence>
<evidence type="ECO:0000255" key="1">
    <source>
        <dbReference type="HAMAP-Rule" id="MF_00508"/>
    </source>
</evidence>
<evidence type="ECO:0000305" key="2"/>
<reference key="1">
    <citation type="journal article" date="2006" name="Proc. Natl. Acad. Sci. U.S.A.">
        <title>Comparative genomics of the lactic acid bacteria.</title>
        <authorList>
            <person name="Makarova K.S."/>
            <person name="Slesarev A."/>
            <person name="Wolf Y.I."/>
            <person name="Sorokin A."/>
            <person name="Mirkin B."/>
            <person name="Koonin E.V."/>
            <person name="Pavlov A."/>
            <person name="Pavlova N."/>
            <person name="Karamychev V."/>
            <person name="Polouchine N."/>
            <person name="Shakhova V."/>
            <person name="Grigoriev I."/>
            <person name="Lou Y."/>
            <person name="Rohksar D."/>
            <person name="Lucas S."/>
            <person name="Huang K."/>
            <person name="Goodstein D.M."/>
            <person name="Hawkins T."/>
            <person name="Plengvidhya V."/>
            <person name="Welker D."/>
            <person name="Hughes J."/>
            <person name="Goh Y."/>
            <person name="Benson A."/>
            <person name="Baldwin K."/>
            <person name="Lee J.-H."/>
            <person name="Diaz-Muniz I."/>
            <person name="Dosti B."/>
            <person name="Smeianov V."/>
            <person name="Wechter W."/>
            <person name="Barabote R."/>
            <person name="Lorca G."/>
            <person name="Altermann E."/>
            <person name="Barrangou R."/>
            <person name="Ganesan B."/>
            <person name="Xie Y."/>
            <person name="Rawsthorne H."/>
            <person name="Tamir D."/>
            <person name="Parker C."/>
            <person name="Breidt F."/>
            <person name="Broadbent J.R."/>
            <person name="Hutkins R."/>
            <person name="O'Sullivan D."/>
            <person name="Steele J."/>
            <person name="Unlu G."/>
            <person name="Saier M.H. Jr."/>
            <person name="Klaenhammer T."/>
            <person name="Richardson P."/>
            <person name="Kozyavkin S."/>
            <person name="Weimer B.C."/>
            <person name="Mills D.A."/>
        </authorList>
    </citation>
    <scope>NUCLEOTIDE SEQUENCE [LARGE SCALE GENOMIC DNA]</scope>
    <source>
        <strain>ATCC BAA-491 / LMD-9</strain>
    </source>
</reference>
<protein>
    <recommendedName>
        <fullName evidence="1">Small ribosomal subunit protein uS10</fullName>
    </recommendedName>
    <alternativeName>
        <fullName evidence="2">30S ribosomal protein S10</fullName>
    </alternativeName>
</protein>
<keyword id="KW-0687">Ribonucleoprotein</keyword>
<keyword id="KW-0689">Ribosomal protein</keyword>
<comment type="function">
    <text evidence="1">Involved in the binding of tRNA to the ribosomes.</text>
</comment>
<comment type="subunit">
    <text evidence="1">Part of the 30S ribosomal subunit.</text>
</comment>
<comment type="similarity">
    <text evidence="1">Belongs to the universal ribosomal protein uS10 family.</text>
</comment>
<accession>Q03IF0</accession>
<proteinExistence type="inferred from homology"/>